<organism>
    <name type="scientific">Encephalitozoon cuniculi (strain GB-M1)</name>
    <name type="common">Microsporidian parasite</name>
    <dbReference type="NCBI Taxonomy" id="284813"/>
    <lineage>
        <taxon>Eukaryota</taxon>
        <taxon>Fungi</taxon>
        <taxon>Fungi incertae sedis</taxon>
        <taxon>Microsporidia</taxon>
        <taxon>Unikaryonidae</taxon>
        <taxon>Encephalitozoon</taxon>
    </lineage>
</organism>
<name>HAT2_ENCCU</name>
<gene>
    <name type="primary">HAT2</name>
    <name type="ordered locus">ECU07_0750</name>
</gene>
<comment type="function">
    <text evidence="1">Regulatory subunit of the histone acetylase B (HAT-B) complex. The complex acetylates histone H4 which is required for telomeric silencing (By similarity).</text>
</comment>
<comment type="subunit">
    <text evidence="1">Component of the HAT-B complex.</text>
</comment>
<comment type="subcellular location">
    <subcellularLocation>
        <location evidence="1">Cytoplasm</location>
    </subcellularLocation>
    <subcellularLocation>
        <location evidence="1">Nucleus</location>
    </subcellularLocation>
</comment>
<comment type="developmental stage">
    <text evidence="2">Expressed in late sporogonial stages.</text>
</comment>
<comment type="similarity">
    <text evidence="3">Belongs to the WD repeat RBAP46/RBAP48/MSI1 family.</text>
</comment>
<proteinExistence type="evidence at protein level"/>
<keyword id="KW-0156">Chromatin regulator</keyword>
<keyword id="KW-0963">Cytoplasm</keyword>
<keyword id="KW-0539">Nucleus</keyword>
<keyword id="KW-1185">Reference proteome</keyword>
<keyword id="KW-0677">Repeat</keyword>
<keyword id="KW-0853">WD repeat</keyword>
<sequence length="384" mass="43089">MDNQVLEQKIVNEEYKIWKKNVPYLYDLMFSHTLEWPSLSVQWFPDVRRDEEAGRTTQRLLLSTHTSGSEEEYILIAKVEFPDEFDESLNEEVGGDMRLKIIQRISIMDEANRVRYNPSACNVLAVRSDLPDIHVYDYTKHLSHEKIPRPDMVLRGHSAGGFGLSWNHLNPGELAGCGEGGEVCVFDVSQESSSISPTVVLRRHETAVNDCAFSFFDKKLLSSAGDGGMVVLWDTRSEDCIHAIEEAHTSDILSVRFSPLDGNVIATSSCDGSVKVWDRRSLSQPLHILLGHSKDVVSVEWSPHNDKVLASGSTDRRVIVWDLGQAGAEVPEEYKAEGPPEMKFLHGGHTSTVCDISWNPAEPFEIASVSEDNILQIWQMPQPE</sequence>
<dbReference type="EMBL" id="AL590447">
    <property type="protein sequence ID" value="CAD25607.1"/>
    <property type="molecule type" value="Genomic_DNA"/>
</dbReference>
<dbReference type="RefSeq" id="NP_586003.1">
    <property type="nucleotide sequence ID" value="NM_001041625.1"/>
</dbReference>
<dbReference type="SMR" id="Q8SRK1"/>
<dbReference type="FunCoup" id="Q8SRK1">
    <property type="interactions" value="333"/>
</dbReference>
<dbReference type="STRING" id="284813.Q8SRK1"/>
<dbReference type="GeneID" id="859432"/>
<dbReference type="KEGG" id="ecu:ECU07_0750"/>
<dbReference type="VEuPathDB" id="MicrosporidiaDB:ECU07_0750"/>
<dbReference type="HOGENOM" id="CLU_020445_3_1_1"/>
<dbReference type="InParanoid" id="Q8SRK1"/>
<dbReference type="OMA" id="KIRAMPA"/>
<dbReference type="OrthoDB" id="427795at2759"/>
<dbReference type="Proteomes" id="UP000000819">
    <property type="component" value="Chromosome VII"/>
</dbReference>
<dbReference type="GO" id="GO:0005737">
    <property type="term" value="C:cytoplasm"/>
    <property type="evidence" value="ECO:0007669"/>
    <property type="project" value="UniProtKB-SubCell"/>
</dbReference>
<dbReference type="GO" id="GO:0005634">
    <property type="term" value="C:nucleus"/>
    <property type="evidence" value="ECO:0007669"/>
    <property type="project" value="UniProtKB-SubCell"/>
</dbReference>
<dbReference type="GO" id="GO:0006325">
    <property type="term" value="P:chromatin organization"/>
    <property type="evidence" value="ECO:0007669"/>
    <property type="project" value="UniProtKB-KW"/>
</dbReference>
<dbReference type="Gene3D" id="2.130.10.10">
    <property type="entry name" value="YVTN repeat-like/Quinoprotein amine dehydrogenase"/>
    <property type="match status" value="1"/>
</dbReference>
<dbReference type="InterPro" id="IPR020472">
    <property type="entry name" value="G-protein_beta_WD-40_rep"/>
</dbReference>
<dbReference type="InterPro" id="IPR022052">
    <property type="entry name" value="Histone-bd_RBBP4-like_N"/>
</dbReference>
<dbReference type="InterPro" id="IPR015943">
    <property type="entry name" value="WD40/YVTN_repeat-like_dom_sf"/>
</dbReference>
<dbReference type="InterPro" id="IPR019775">
    <property type="entry name" value="WD40_repeat_CS"/>
</dbReference>
<dbReference type="InterPro" id="IPR036322">
    <property type="entry name" value="WD40_repeat_dom_sf"/>
</dbReference>
<dbReference type="InterPro" id="IPR001680">
    <property type="entry name" value="WD40_rpt"/>
</dbReference>
<dbReference type="InterPro" id="IPR050459">
    <property type="entry name" value="WD_repeat_RBAP46/RBAP48/MSI1"/>
</dbReference>
<dbReference type="PANTHER" id="PTHR22850">
    <property type="entry name" value="WD40 REPEAT FAMILY"/>
    <property type="match status" value="1"/>
</dbReference>
<dbReference type="Pfam" id="PF12265">
    <property type="entry name" value="CAF1C_H4-bd"/>
    <property type="match status" value="1"/>
</dbReference>
<dbReference type="Pfam" id="PF00400">
    <property type="entry name" value="WD40"/>
    <property type="match status" value="4"/>
</dbReference>
<dbReference type="PRINTS" id="PR00320">
    <property type="entry name" value="GPROTEINBRPT"/>
</dbReference>
<dbReference type="SMART" id="SM00320">
    <property type="entry name" value="WD40"/>
    <property type="match status" value="5"/>
</dbReference>
<dbReference type="SUPFAM" id="SSF50978">
    <property type="entry name" value="WD40 repeat-like"/>
    <property type="match status" value="1"/>
</dbReference>
<dbReference type="PROSITE" id="PS00678">
    <property type="entry name" value="WD_REPEATS_1"/>
    <property type="match status" value="1"/>
</dbReference>
<dbReference type="PROSITE" id="PS50082">
    <property type="entry name" value="WD_REPEATS_2"/>
    <property type="match status" value="4"/>
</dbReference>
<dbReference type="PROSITE" id="PS50294">
    <property type="entry name" value="WD_REPEATS_REGION"/>
    <property type="match status" value="1"/>
</dbReference>
<evidence type="ECO:0000250" key="1"/>
<evidence type="ECO:0000269" key="2">
    <source>
    </source>
</evidence>
<evidence type="ECO:0000305" key="3"/>
<feature type="chain" id="PRO_0000383030" description="Histone acetyltransferase type B subunit 2">
    <location>
        <begin position="1"/>
        <end position="384"/>
    </location>
</feature>
<feature type="repeat" description="WD 1">
    <location>
        <begin position="156"/>
        <end position="196"/>
    </location>
</feature>
<feature type="repeat" description="WD 2">
    <location>
        <begin position="203"/>
        <end position="243"/>
    </location>
</feature>
<feature type="repeat" description="WD 3">
    <location>
        <begin position="247"/>
        <end position="287"/>
    </location>
</feature>
<feature type="repeat" description="WD 4">
    <location>
        <begin position="291"/>
        <end position="331"/>
    </location>
</feature>
<feature type="repeat" description="WD 5">
    <location>
        <begin position="348"/>
        <end position="384"/>
    </location>
</feature>
<protein>
    <recommendedName>
        <fullName>Histone acetyltransferase type B subunit 2</fullName>
    </recommendedName>
</protein>
<accession>Q8SRK1</accession>
<reference key="1">
    <citation type="journal article" date="2001" name="Nature">
        <title>Genome sequence and gene compaction of the eukaryote parasite Encephalitozoon cuniculi.</title>
        <authorList>
            <person name="Katinka M.D."/>
            <person name="Duprat S."/>
            <person name="Cornillot E."/>
            <person name="Metenier G."/>
            <person name="Thomarat F."/>
            <person name="Prensier G."/>
            <person name="Barbe V."/>
            <person name="Peyretaillade E."/>
            <person name="Brottier P."/>
            <person name="Wincker P."/>
            <person name="Delbac F."/>
            <person name="El Alaoui H."/>
            <person name="Peyret P."/>
            <person name="Saurin W."/>
            <person name="Gouy M."/>
            <person name="Weissenbach J."/>
            <person name="Vivares C.P."/>
        </authorList>
    </citation>
    <scope>NUCLEOTIDE SEQUENCE [LARGE SCALE GENOMIC DNA]</scope>
    <source>
        <strain>GB-M1</strain>
    </source>
</reference>
<reference key="2">
    <citation type="journal article" date="2006" name="Proteomics">
        <title>Proteomic analysis of the eukaryotic parasite Encephalitozoon cuniculi (microsporidia): a reference map for proteins expressed in late sporogonial stages.</title>
        <authorList>
            <person name="Brosson D."/>
            <person name="Kuhn L."/>
            <person name="Delbac F."/>
            <person name="Garin J."/>
            <person name="Vivares C.P."/>
            <person name="Texier C."/>
        </authorList>
    </citation>
    <scope>IDENTIFICATION BY MASS SPECTROMETRY [LARGE SCALE ANALYSIS]</scope>
    <scope>DEVELOPMENTAL STAGE</scope>
</reference>